<dbReference type="SMR" id="P0DJ69"/>
<dbReference type="GO" id="GO:0005576">
    <property type="term" value="C:extracellular region"/>
    <property type="evidence" value="ECO:0007669"/>
    <property type="project" value="UniProtKB-SubCell"/>
</dbReference>
<dbReference type="GO" id="GO:0015459">
    <property type="term" value="F:potassium channel regulator activity"/>
    <property type="evidence" value="ECO:0007669"/>
    <property type="project" value="UniProtKB-KW"/>
</dbReference>
<dbReference type="GO" id="GO:0004867">
    <property type="term" value="F:serine-type endopeptidase inhibitor activity"/>
    <property type="evidence" value="ECO:0007669"/>
    <property type="project" value="UniProtKB-KW"/>
</dbReference>
<dbReference type="GO" id="GO:0090729">
    <property type="term" value="F:toxin activity"/>
    <property type="evidence" value="ECO:0007669"/>
    <property type="project" value="UniProtKB-KW"/>
</dbReference>
<dbReference type="GO" id="GO:0044562">
    <property type="term" value="P:envenomation resulting in negative regulation of voltage-gated potassium channel activity in another organism"/>
    <property type="evidence" value="ECO:0007669"/>
    <property type="project" value="UniProtKB-ARBA"/>
</dbReference>
<dbReference type="CDD" id="cd22598">
    <property type="entry name" value="Kunitz_huwentoxin"/>
    <property type="match status" value="1"/>
</dbReference>
<dbReference type="FunFam" id="4.10.410.10:FF:000020">
    <property type="entry name" value="Collagen, type VI, alpha 3"/>
    <property type="match status" value="1"/>
</dbReference>
<dbReference type="Gene3D" id="4.10.410.10">
    <property type="entry name" value="Pancreatic trypsin inhibitor Kunitz domain"/>
    <property type="match status" value="1"/>
</dbReference>
<dbReference type="InterPro" id="IPR002223">
    <property type="entry name" value="Kunitz_BPTI"/>
</dbReference>
<dbReference type="InterPro" id="IPR036880">
    <property type="entry name" value="Kunitz_BPTI_sf"/>
</dbReference>
<dbReference type="InterPro" id="IPR051388">
    <property type="entry name" value="Serpin_venom_toxin"/>
</dbReference>
<dbReference type="PANTHER" id="PTHR46751">
    <property type="entry name" value="EPPIN"/>
    <property type="match status" value="1"/>
</dbReference>
<dbReference type="PANTHER" id="PTHR46751:SF1">
    <property type="entry name" value="WAP FOUR-DISULFIDE CORE DOMAIN PROTEIN 6A"/>
    <property type="match status" value="1"/>
</dbReference>
<dbReference type="Pfam" id="PF00014">
    <property type="entry name" value="Kunitz_BPTI"/>
    <property type="match status" value="1"/>
</dbReference>
<dbReference type="PRINTS" id="PR00759">
    <property type="entry name" value="BASICPTASE"/>
</dbReference>
<dbReference type="SMART" id="SM00131">
    <property type="entry name" value="KU"/>
    <property type="match status" value="1"/>
</dbReference>
<dbReference type="SUPFAM" id="SSF57362">
    <property type="entry name" value="BPTI-like"/>
    <property type="match status" value="1"/>
</dbReference>
<dbReference type="PROSITE" id="PS50279">
    <property type="entry name" value="BPTI_KUNITZ_2"/>
    <property type="match status" value="1"/>
</dbReference>
<proteinExistence type="evidence at transcript level"/>
<feature type="signal peptide" evidence="1">
    <location>
        <begin position="1" status="less than"/>
        <end position="22"/>
    </location>
</feature>
<feature type="chain" id="PRO_0000413814" description="Kunitz-type serine protease inhibitor HNTX-852">
    <location>
        <begin position="23"/>
        <end position="71"/>
    </location>
</feature>
<feature type="domain" description="BPTI/Kunitz inhibitor" evidence="3">
    <location>
        <begin position="23"/>
        <end position="68"/>
    </location>
</feature>
<feature type="site" description="May bind Kv1" evidence="1">
    <location>
        <position position="22"/>
    </location>
</feature>
<feature type="site" description="Reactive bond for chymotrypsin" evidence="1">
    <location>
        <begin position="30"/>
        <end position="31"/>
    </location>
</feature>
<feature type="disulfide bond" evidence="3">
    <location>
        <begin position="20"/>
        <end position="68"/>
    </location>
</feature>
<feature type="disulfide bond" evidence="3">
    <location>
        <begin position="43"/>
        <end position="64"/>
    </location>
</feature>
<feature type="non-terminal residue">
    <location>
        <position position="1"/>
    </location>
</feature>
<name>VKT52_CYRHA</name>
<keyword id="KW-1015">Disulfide bond</keyword>
<keyword id="KW-0646">Protease inhibitor</keyword>
<keyword id="KW-0964">Secreted</keyword>
<keyword id="KW-0722">Serine protease inhibitor</keyword>
<keyword id="KW-0732">Signal</keyword>
<evidence type="ECO:0000250" key="1"/>
<evidence type="ECO:0000250" key="2">
    <source>
        <dbReference type="UniProtKB" id="P68425"/>
    </source>
</evidence>
<evidence type="ECO:0000255" key="3">
    <source>
        <dbReference type="PROSITE-ProRule" id="PRU00031"/>
    </source>
</evidence>
<evidence type="ECO:0000303" key="4">
    <source>
    </source>
</evidence>
<evidence type="ECO:0000305" key="5"/>
<evidence type="ECO:0000305" key="6">
    <source>
    </source>
</evidence>
<reference key="1">
    <citation type="journal article" date="2008" name="PLoS ONE">
        <title>Discovery of a distinct superfamily of Kunitz-type toxin (KTT) from tarantulas.</title>
        <authorList>
            <person name="Yuan C.-H."/>
            <person name="He Q.-Y."/>
            <person name="Peng K."/>
            <person name="Diao J.-B."/>
            <person name="Jiang L.-P."/>
            <person name="Tang X."/>
            <person name="Liang S.-P."/>
        </authorList>
    </citation>
    <scope>NUCLEOTIDE SEQUENCE [MRNA]</scope>
    <source>
        <tissue>Venom gland</tissue>
    </source>
</reference>
<sequence length="71" mass="8079">DPSGSPHIRILPQETFEDICRLPSDSGDCLRFFEMWYFDGTTCTKFVYGGYGGNDNRFPTEKACMKRCAKA</sequence>
<comment type="function">
    <text evidence="2">Serine protease inhibitor that inhibits trypsin at a molar ratio of 1:1.</text>
</comment>
<comment type="subcellular location">
    <subcellularLocation>
        <location evidence="6">Secreted</location>
    </subcellularLocation>
</comment>
<comment type="tissue specificity">
    <text evidence="6">Expressed by the venom gland.</text>
</comment>
<comment type="similarity">
    <text evidence="5">Belongs to the venom Kunitz-type family. 03 (sub-Kunitz) subfamily.</text>
</comment>
<organism>
    <name type="scientific">Cyriopagopus hainanus</name>
    <name type="common">Chinese bird spider</name>
    <name type="synonym">Haplopelma hainanum</name>
    <dbReference type="NCBI Taxonomy" id="209901"/>
    <lineage>
        <taxon>Eukaryota</taxon>
        <taxon>Metazoa</taxon>
        <taxon>Ecdysozoa</taxon>
        <taxon>Arthropoda</taxon>
        <taxon>Chelicerata</taxon>
        <taxon>Arachnida</taxon>
        <taxon>Araneae</taxon>
        <taxon>Mygalomorphae</taxon>
        <taxon>Theraphosidae</taxon>
        <taxon>Haplopelma</taxon>
    </lineage>
</organism>
<protein>
    <recommendedName>
        <fullName evidence="4">Kunitz-type serine protease inhibitor HNTX-852</fullName>
    </recommendedName>
</protein>
<accession>P0DJ69</accession>